<comment type="function">
    <text evidence="1">Activates ribosomal RNA transcription. Plays a direct role in upstream activation of rRNA promoters.</text>
</comment>
<comment type="subunit">
    <text evidence="1">Homodimer.</text>
</comment>
<comment type="similarity">
    <text evidence="1">Belongs to the transcriptional regulatory Fis family.</text>
</comment>
<reference key="1">
    <citation type="journal article" date="1995" name="J. Bacteriol.">
        <title>Sequence, regulation, and functions of fis in Salmonella typhimurium.</title>
        <authorList>
            <person name="Osuna R."/>
            <person name="Lienau D."/>
            <person name="Hughes K.T."/>
            <person name="Johnson R.C."/>
        </authorList>
    </citation>
    <scope>NUCLEOTIDE SEQUENCE [GENOMIC DNA]</scope>
    <source>
        <strain>LT2</strain>
    </source>
</reference>
<reference key="2">
    <citation type="journal article" date="2001" name="Nature">
        <title>Complete genome sequence of Salmonella enterica serovar Typhimurium LT2.</title>
        <authorList>
            <person name="McClelland M."/>
            <person name="Sanderson K.E."/>
            <person name="Spieth J."/>
            <person name="Clifton S.W."/>
            <person name="Latreille P."/>
            <person name="Courtney L."/>
            <person name="Porwollik S."/>
            <person name="Ali J."/>
            <person name="Dante M."/>
            <person name="Du F."/>
            <person name="Hou S."/>
            <person name="Layman D."/>
            <person name="Leonard S."/>
            <person name="Nguyen C."/>
            <person name="Scott K."/>
            <person name="Holmes A."/>
            <person name="Grewal N."/>
            <person name="Mulvaney E."/>
            <person name="Ryan E."/>
            <person name="Sun H."/>
            <person name="Florea L."/>
            <person name="Miller W."/>
            <person name="Stoneking T."/>
            <person name="Nhan M."/>
            <person name="Waterston R."/>
            <person name="Wilson R.K."/>
        </authorList>
    </citation>
    <scope>NUCLEOTIDE SEQUENCE [LARGE SCALE GENOMIC DNA]</scope>
    <source>
        <strain>LT2 / SGSC1412 / ATCC 700720</strain>
    </source>
</reference>
<sequence>MFEQRVNSDVLTVSTVNSQDQVTQKPLRDSVKQALKNYFAQLNGQDVNDLYELVLAEVEQPLLDMVMQYTRGNQTRAALMMGINRGTLRKKLKKYGMN</sequence>
<accession>P0A6R6</accession>
<accession>P11028</accession>
<accession>P37404</accession>
<keyword id="KW-0010">Activator</keyword>
<keyword id="KW-0238">DNA-binding</keyword>
<keyword id="KW-1185">Reference proteome</keyword>
<keyword id="KW-0804">Transcription</keyword>
<keyword id="KW-0805">Transcription regulation</keyword>
<evidence type="ECO:0000255" key="1">
    <source>
        <dbReference type="HAMAP-Rule" id="MF_00166"/>
    </source>
</evidence>
<gene>
    <name evidence="1" type="primary">fis</name>
    <name type="ordered locus">STM3385</name>
</gene>
<name>FIS_SALTY</name>
<dbReference type="EMBL" id="U03101">
    <property type="protein sequence ID" value="AAA69020.1"/>
    <property type="molecule type" value="Genomic_DNA"/>
</dbReference>
<dbReference type="EMBL" id="AE006468">
    <property type="protein sequence ID" value="AAL22254.1"/>
    <property type="molecule type" value="Genomic_DNA"/>
</dbReference>
<dbReference type="PIR" id="B56267">
    <property type="entry name" value="B56267"/>
</dbReference>
<dbReference type="RefSeq" id="NP_462295.1">
    <property type="nucleotide sequence ID" value="NC_003197.2"/>
</dbReference>
<dbReference type="RefSeq" id="WP_000462905.1">
    <property type="nucleotide sequence ID" value="NC_003197.2"/>
</dbReference>
<dbReference type="SMR" id="P0A6R6"/>
<dbReference type="STRING" id="99287.STM3385"/>
<dbReference type="PaxDb" id="99287-STM3385"/>
<dbReference type="GeneID" id="1254908"/>
<dbReference type="GeneID" id="98390389"/>
<dbReference type="KEGG" id="stm:STM3385"/>
<dbReference type="PATRIC" id="fig|99287.12.peg.3586"/>
<dbReference type="HOGENOM" id="CLU_158040_3_0_6"/>
<dbReference type="OMA" id="LCEVEAP"/>
<dbReference type="PhylomeDB" id="P0A6R6"/>
<dbReference type="BioCyc" id="SENT99287:STM3385-MONOMER"/>
<dbReference type="PRO" id="PR:P0A6R6"/>
<dbReference type="Proteomes" id="UP000001014">
    <property type="component" value="Chromosome"/>
</dbReference>
<dbReference type="GO" id="GO:0003700">
    <property type="term" value="F:DNA-binding transcription factor activity"/>
    <property type="evidence" value="ECO:0007669"/>
    <property type="project" value="UniProtKB-UniRule"/>
</dbReference>
<dbReference type="GO" id="GO:0043565">
    <property type="term" value="F:sequence-specific DNA binding"/>
    <property type="evidence" value="ECO:0000318"/>
    <property type="project" value="GO_Central"/>
</dbReference>
<dbReference type="FunFam" id="1.10.10.60:FF:000006">
    <property type="entry name" value="DNA-binding protein Fis"/>
    <property type="match status" value="1"/>
</dbReference>
<dbReference type="Gene3D" id="1.10.10.60">
    <property type="entry name" value="Homeodomain-like"/>
    <property type="match status" value="1"/>
</dbReference>
<dbReference type="HAMAP" id="MF_00166">
    <property type="entry name" value="DNA_binding_Fis"/>
    <property type="match status" value="1"/>
</dbReference>
<dbReference type="InterPro" id="IPR005412">
    <property type="entry name" value="Fis_DNA-bd"/>
</dbReference>
<dbReference type="InterPro" id="IPR009057">
    <property type="entry name" value="Homeodomain-like_sf"/>
</dbReference>
<dbReference type="InterPro" id="IPR002197">
    <property type="entry name" value="HTH_Fis"/>
</dbReference>
<dbReference type="InterPro" id="IPR050207">
    <property type="entry name" value="Trans_regulatory_Fis"/>
</dbReference>
<dbReference type="NCBIfam" id="NF001659">
    <property type="entry name" value="PRK00430.1"/>
    <property type="match status" value="1"/>
</dbReference>
<dbReference type="PANTHER" id="PTHR47918">
    <property type="entry name" value="DNA-BINDING PROTEIN FIS"/>
    <property type="match status" value="1"/>
</dbReference>
<dbReference type="PANTHER" id="PTHR47918:SF1">
    <property type="entry name" value="DNA-BINDING PROTEIN FIS"/>
    <property type="match status" value="1"/>
</dbReference>
<dbReference type="Pfam" id="PF02954">
    <property type="entry name" value="HTH_8"/>
    <property type="match status" value="1"/>
</dbReference>
<dbReference type="PIRSF" id="PIRSF002097">
    <property type="entry name" value="DNA-binding_Fis"/>
    <property type="match status" value="1"/>
</dbReference>
<dbReference type="PRINTS" id="PR01591">
    <property type="entry name" value="DNABINDNGFIS"/>
</dbReference>
<dbReference type="PRINTS" id="PR01590">
    <property type="entry name" value="HTHFIS"/>
</dbReference>
<dbReference type="SUPFAM" id="SSF46689">
    <property type="entry name" value="Homeodomain-like"/>
    <property type="match status" value="1"/>
</dbReference>
<protein>
    <recommendedName>
        <fullName evidence="1">DNA-binding protein Fis</fullName>
    </recommendedName>
</protein>
<proteinExistence type="inferred from homology"/>
<feature type="chain" id="PRO_0000203894" description="DNA-binding protein Fis">
    <location>
        <begin position="1"/>
        <end position="98"/>
    </location>
</feature>
<feature type="DNA-binding region" description="H-T-H motif" evidence="1">
    <location>
        <begin position="74"/>
        <end position="93"/>
    </location>
</feature>
<organism>
    <name type="scientific">Salmonella typhimurium (strain LT2 / SGSC1412 / ATCC 700720)</name>
    <dbReference type="NCBI Taxonomy" id="99287"/>
    <lineage>
        <taxon>Bacteria</taxon>
        <taxon>Pseudomonadati</taxon>
        <taxon>Pseudomonadota</taxon>
        <taxon>Gammaproteobacteria</taxon>
        <taxon>Enterobacterales</taxon>
        <taxon>Enterobacteriaceae</taxon>
        <taxon>Salmonella</taxon>
    </lineage>
</organism>